<name>CYOE1_PSEPW</name>
<protein>
    <recommendedName>
        <fullName evidence="1">Protoheme IX farnesyltransferase 1</fullName>
        <ecNumber evidence="1">2.5.1.141</ecNumber>
    </recommendedName>
    <alternativeName>
        <fullName evidence="1">Heme B farnesyltransferase 1</fullName>
    </alternativeName>
    <alternativeName>
        <fullName evidence="1">Heme O synthase 1</fullName>
    </alternativeName>
</protein>
<comment type="function">
    <text evidence="1">Converts heme B (protoheme IX) to heme O by substitution of the vinyl group on carbon 2 of heme B porphyrin ring with a hydroxyethyl farnesyl side group.</text>
</comment>
<comment type="catalytic activity">
    <reaction evidence="1">
        <text>heme b + (2E,6E)-farnesyl diphosphate + H2O = Fe(II)-heme o + diphosphate</text>
        <dbReference type="Rhea" id="RHEA:28070"/>
        <dbReference type="ChEBI" id="CHEBI:15377"/>
        <dbReference type="ChEBI" id="CHEBI:33019"/>
        <dbReference type="ChEBI" id="CHEBI:60344"/>
        <dbReference type="ChEBI" id="CHEBI:60530"/>
        <dbReference type="ChEBI" id="CHEBI:175763"/>
        <dbReference type="EC" id="2.5.1.141"/>
    </reaction>
</comment>
<comment type="pathway">
    <text evidence="1">Porphyrin-containing compound metabolism; heme O biosynthesis; heme O from protoheme: step 1/1.</text>
</comment>
<comment type="subcellular location">
    <subcellularLocation>
        <location evidence="1">Cell inner membrane</location>
        <topology evidence="1">Multi-pass membrane protein</topology>
    </subcellularLocation>
</comment>
<comment type="miscellaneous">
    <text evidence="1">Carbon 2 of the heme B porphyrin ring is defined according to the Fischer nomenclature.</text>
</comment>
<comment type="similarity">
    <text evidence="1">Belongs to the UbiA prenyltransferase family. Protoheme IX farnesyltransferase subfamily.</text>
</comment>
<dbReference type="EC" id="2.5.1.141" evidence="1"/>
<dbReference type="EMBL" id="CP000949">
    <property type="protein sequence ID" value="ACA70636.1"/>
    <property type="molecule type" value="Genomic_DNA"/>
</dbReference>
<dbReference type="SMR" id="B1J467"/>
<dbReference type="STRING" id="390235.PputW619_0130"/>
<dbReference type="KEGG" id="ppw:PputW619_0130"/>
<dbReference type="eggNOG" id="COG0109">
    <property type="taxonomic scope" value="Bacteria"/>
</dbReference>
<dbReference type="HOGENOM" id="CLU_029631_0_2_6"/>
<dbReference type="OrthoDB" id="9814417at2"/>
<dbReference type="UniPathway" id="UPA00834">
    <property type="reaction ID" value="UER00712"/>
</dbReference>
<dbReference type="GO" id="GO:0005886">
    <property type="term" value="C:plasma membrane"/>
    <property type="evidence" value="ECO:0007669"/>
    <property type="project" value="UniProtKB-SubCell"/>
</dbReference>
<dbReference type="GO" id="GO:0008495">
    <property type="term" value="F:protoheme IX farnesyltransferase activity"/>
    <property type="evidence" value="ECO:0007669"/>
    <property type="project" value="UniProtKB-UniRule"/>
</dbReference>
<dbReference type="GO" id="GO:0048034">
    <property type="term" value="P:heme O biosynthetic process"/>
    <property type="evidence" value="ECO:0007669"/>
    <property type="project" value="UniProtKB-UniRule"/>
</dbReference>
<dbReference type="CDD" id="cd13957">
    <property type="entry name" value="PT_UbiA_Cox10"/>
    <property type="match status" value="1"/>
</dbReference>
<dbReference type="FunFam" id="1.10.357.140:FF:000001">
    <property type="entry name" value="Protoheme IX farnesyltransferase"/>
    <property type="match status" value="1"/>
</dbReference>
<dbReference type="Gene3D" id="1.10.357.140">
    <property type="entry name" value="UbiA prenyltransferase"/>
    <property type="match status" value="1"/>
</dbReference>
<dbReference type="HAMAP" id="MF_00154">
    <property type="entry name" value="CyoE_CtaB"/>
    <property type="match status" value="1"/>
</dbReference>
<dbReference type="InterPro" id="IPR006369">
    <property type="entry name" value="Protohaem_IX_farnesylTrfase"/>
</dbReference>
<dbReference type="InterPro" id="IPR000537">
    <property type="entry name" value="UbiA_prenyltransferase"/>
</dbReference>
<dbReference type="InterPro" id="IPR030470">
    <property type="entry name" value="UbiA_prenylTrfase_CS"/>
</dbReference>
<dbReference type="InterPro" id="IPR044878">
    <property type="entry name" value="UbiA_sf"/>
</dbReference>
<dbReference type="NCBIfam" id="TIGR01473">
    <property type="entry name" value="cyoE_ctaB"/>
    <property type="match status" value="1"/>
</dbReference>
<dbReference type="NCBIfam" id="NF003349">
    <property type="entry name" value="PRK04375.1-2"/>
    <property type="match status" value="1"/>
</dbReference>
<dbReference type="PANTHER" id="PTHR43448:SF7">
    <property type="entry name" value="4-HYDROXYBENZOATE SOLANESYLTRANSFERASE"/>
    <property type="match status" value="1"/>
</dbReference>
<dbReference type="PANTHER" id="PTHR43448">
    <property type="entry name" value="PROTOHEME IX FARNESYLTRANSFERASE, MITOCHONDRIAL"/>
    <property type="match status" value="1"/>
</dbReference>
<dbReference type="Pfam" id="PF01040">
    <property type="entry name" value="UbiA"/>
    <property type="match status" value="1"/>
</dbReference>
<dbReference type="PROSITE" id="PS00943">
    <property type="entry name" value="UBIA"/>
    <property type="match status" value="1"/>
</dbReference>
<reference key="1">
    <citation type="submission" date="2008-02" db="EMBL/GenBank/DDBJ databases">
        <title>Complete sequence of Pseudomonas putida W619.</title>
        <authorList>
            <person name="Copeland A."/>
            <person name="Lucas S."/>
            <person name="Lapidus A."/>
            <person name="Barry K."/>
            <person name="Detter J.C."/>
            <person name="Glavina del Rio T."/>
            <person name="Dalin E."/>
            <person name="Tice H."/>
            <person name="Pitluck S."/>
            <person name="Chain P."/>
            <person name="Malfatti S."/>
            <person name="Shin M."/>
            <person name="Vergez L."/>
            <person name="Schmutz J."/>
            <person name="Larimer F."/>
            <person name="Land M."/>
            <person name="Hauser L."/>
            <person name="Kyrpides N."/>
            <person name="Kim E."/>
            <person name="Taghavi S."/>
            <person name="Vangronsveld D."/>
            <person name="van der Lelie D."/>
            <person name="Richardson P."/>
        </authorList>
    </citation>
    <scope>NUCLEOTIDE SEQUENCE [LARGE SCALE GENOMIC DNA]</scope>
    <source>
        <strain>W619</strain>
    </source>
</reference>
<gene>
    <name evidence="1" type="primary">cyoE1</name>
    <name type="ordered locus">PputW619_0130</name>
</gene>
<proteinExistence type="inferred from homology"/>
<sequence>MATLLSAQRAGWRDYLELTKPKVVVLMLITSLVGMFLATRAGVPWSVLLFGNLGIALCAGGAAAVNHVLDRRIDALMARTHKRPLAEGRVAPLPALLFALALALLGMALLLMFTNALTAWLTLASLLGYAVLYTGFLKRATPQNIVIGGLAGAAPPLLGWVAVSGHVSAEPLLLVLIIFAWTPPHFWALAIHRKEEYAKADIPMLPVTHGERYTKLHILLYTLILLAVTLLPYAIHMSGPLYLVCALALGLRFLQWAWVLYRGSRPHAAIGTFKYSIGYLFALFIALLVDHYLLLNL</sequence>
<accession>B1J467</accession>
<organism>
    <name type="scientific">Pseudomonas putida (strain W619)</name>
    <dbReference type="NCBI Taxonomy" id="390235"/>
    <lineage>
        <taxon>Bacteria</taxon>
        <taxon>Pseudomonadati</taxon>
        <taxon>Pseudomonadota</taxon>
        <taxon>Gammaproteobacteria</taxon>
        <taxon>Pseudomonadales</taxon>
        <taxon>Pseudomonadaceae</taxon>
        <taxon>Pseudomonas</taxon>
    </lineage>
</organism>
<evidence type="ECO:0000255" key="1">
    <source>
        <dbReference type="HAMAP-Rule" id="MF_00154"/>
    </source>
</evidence>
<keyword id="KW-0997">Cell inner membrane</keyword>
<keyword id="KW-1003">Cell membrane</keyword>
<keyword id="KW-0350">Heme biosynthesis</keyword>
<keyword id="KW-0472">Membrane</keyword>
<keyword id="KW-0808">Transferase</keyword>
<keyword id="KW-0812">Transmembrane</keyword>
<keyword id="KW-1133">Transmembrane helix</keyword>
<feature type="chain" id="PRO_0000346007" description="Protoheme IX farnesyltransferase 1">
    <location>
        <begin position="1"/>
        <end position="297"/>
    </location>
</feature>
<feature type="transmembrane region" description="Helical" evidence="1">
    <location>
        <begin position="23"/>
        <end position="43"/>
    </location>
</feature>
<feature type="transmembrane region" description="Helical" evidence="1">
    <location>
        <begin position="45"/>
        <end position="65"/>
    </location>
</feature>
<feature type="transmembrane region" description="Helical" evidence="1">
    <location>
        <begin position="93"/>
        <end position="113"/>
    </location>
</feature>
<feature type="transmembrane region" description="Helical" evidence="1">
    <location>
        <begin position="117"/>
        <end position="137"/>
    </location>
</feature>
<feature type="transmembrane region" description="Helical" evidence="1">
    <location>
        <begin position="145"/>
        <end position="165"/>
    </location>
</feature>
<feature type="transmembrane region" description="Helical" evidence="1">
    <location>
        <begin position="171"/>
        <end position="191"/>
    </location>
</feature>
<feature type="transmembrane region" description="Helical" evidence="1">
    <location>
        <begin position="216"/>
        <end position="236"/>
    </location>
</feature>
<feature type="transmembrane region" description="Helical" evidence="1">
    <location>
        <begin position="241"/>
        <end position="261"/>
    </location>
</feature>
<feature type="transmembrane region" description="Helical" evidence="1">
    <location>
        <begin position="277"/>
        <end position="297"/>
    </location>
</feature>